<feature type="chain" id="PRO_0000254283" description="ATP synthase subunit beta">
    <location>
        <begin position="1"/>
        <end position="468"/>
    </location>
</feature>
<feature type="binding site" evidence="1">
    <location>
        <begin position="153"/>
        <end position="160"/>
    </location>
    <ligand>
        <name>ATP</name>
        <dbReference type="ChEBI" id="CHEBI:30616"/>
    </ligand>
</feature>
<protein>
    <recommendedName>
        <fullName evidence="1">ATP synthase subunit beta</fullName>
        <ecNumber evidence="1">7.1.2.2</ecNumber>
    </recommendedName>
    <alternativeName>
        <fullName evidence="1">ATP synthase F1 sector subunit beta</fullName>
    </alternativeName>
    <alternativeName>
        <fullName evidence="1">F-ATPase subunit beta</fullName>
    </alternativeName>
</protein>
<proteinExistence type="inferred from homology"/>
<name>ATPB_LIGS1</name>
<sequence>MSSGKVVQVIGPVVDVQFPLSESLPDIDDALKVKREDGTELVIEVALELGDGIMRTVAMDSTDGLKRGAEVEGTGASISVPVGKDTLGRVFNVLGNTIDNGPEFDEDHPRNPIHRDAPKYDQLSTGIEILETGIKVIDLLAPYIKGGKIGLFGGAGVGKTVLIQELIHNIAQEHNGISVFTGVGERTREGNDLYFEMKESGVLEKTAMVFGQMNEPPGARMRVALTGLTLAEYFRDVEGQDVLLFIDNIFRFTQAGSEVSALLGRIPSAVGYQPTLATEMGQLQERITSTKKGSVTSIQAVYVPADDYTDPAPATTFAHLDATTNLERSLTQQGIYPAVDPLASTSSALTPEIVGEEHYEVATEVQHVLQRYRELQDIISILGMDELSDEEKIIVARARRIQFFLSQNFHVAEQFTGNPGSYVPVEETVKGFKEILEGKYDNLPEEAFRLVGGIEDVVEKAKKLAGNN</sequence>
<keyword id="KW-0066">ATP synthesis</keyword>
<keyword id="KW-0067">ATP-binding</keyword>
<keyword id="KW-1003">Cell membrane</keyword>
<keyword id="KW-0139">CF(1)</keyword>
<keyword id="KW-0375">Hydrogen ion transport</keyword>
<keyword id="KW-0406">Ion transport</keyword>
<keyword id="KW-0472">Membrane</keyword>
<keyword id="KW-0547">Nucleotide-binding</keyword>
<keyword id="KW-1185">Reference proteome</keyword>
<keyword id="KW-1278">Translocase</keyword>
<keyword id="KW-0813">Transport</keyword>
<evidence type="ECO:0000255" key="1">
    <source>
        <dbReference type="HAMAP-Rule" id="MF_01347"/>
    </source>
</evidence>
<comment type="function">
    <text evidence="1">Produces ATP from ADP in the presence of a proton gradient across the membrane. The catalytic sites are hosted primarily by the beta subunits.</text>
</comment>
<comment type="catalytic activity">
    <reaction evidence="1">
        <text>ATP + H2O + 4 H(+)(in) = ADP + phosphate + 5 H(+)(out)</text>
        <dbReference type="Rhea" id="RHEA:57720"/>
        <dbReference type="ChEBI" id="CHEBI:15377"/>
        <dbReference type="ChEBI" id="CHEBI:15378"/>
        <dbReference type="ChEBI" id="CHEBI:30616"/>
        <dbReference type="ChEBI" id="CHEBI:43474"/>
        <dbReference type="ChEBI" id="CHEBI:456216"/>
        <dbReference type="EC" id="7.1.2.2"/>
    </reaction>
</comment>
<comment type="subunit">
    <text evidence="1">F-type ATPases have 2 components, CF(1) - the catalytic core - and CF(0) - the membrane proton channel. CF(1) has five subunits: alpha(3), beta(3), gamma(1), delta(1), epsilon(1). CF(0) has three main subunits: a(1), b(2) and c(9-12). The alpha and beta chains form an alternating ring which encloses part of the gamma chain. CF(1) is attached to CF(0) by a central stalk formed by the gamma and epsilon chains, while a peripheral stalk is formed by the delta and b chains.</text>
</comment>
<comment type="subcellular location">
    <subcellularLocation>
        <location evidence="1">Cell membrane</location>
        <topology evidence="1">Peripheral membrane protein</topology>
    </subcellularLocation>
</comment>
<comment type="similarity">
    <text evidence="1">Belongs to the ATPase alpha/beta chains family.</text>
</comment>
<organism>
    <name type="scientific">Ligilactobacillus salivarius (strain UCC118)</name>
    <name type="common">Lactobacillus salivarius</name>
    <dbReference type="NCBI Taxonomy" id="362948"/>
    <lineage>
        <taxon>Bacteria</taxon>
        <taxon>Bacillati</taxon>
        <taxon>Bacillota</taxon>
        <taxon>Bacilli</taxon>
        <taxon>Lactobacillales</taxon>
        <taxon>Lactobacillaceae</taxon>
        <taxon>Ligilactobacillus</taxon>
    </lineage>
</organism>
<dbReference type="EC" id="7.1.2.2" evidence="1"/>
<dbReference type="EMBL" id="CP000233">
    <property type="protein sequence ID" value="ABD99409.1"/>
    <property type="molecule type" value="Genomic_DNA"/>
</dbReference>
<dbReference type="RefSeq" id="WP_003699945.1">
    <property type="nucleotide sequence ID" value="NC_007929.1"/>
</dbReference>
<dbReference type="RefSeq" id="YP_535492.1">
    <property type="nucleotide sequence ID" value="NC_007929.1"/>
</dbReference>
<dbReference type="SMR" id="Q1WUC6"/>
<dbReference type="STRING" id="362948.LSL_0600"/>
<dbReference type="GeneID" id="89465391"/>
<dbReference type="KEGG" id="lsl:LSL_0600"/>
<dbReference type="PATRIC" id="fig|362948.14.peg.679"/>
<dbReference type="HOGENOM" id="CLU_022398_0_2_9"/>
<dbReference type="OrthoDB" id="9801639at2"/>
<dbReference type="Proteomes" id="UP000006559">
    <property type="component" value="Chromosome"/>
</dbReference>
<dbReference type="GO" id="GO:0005886">
    <property type="term" value="C:plasma membrane"/>
    <property type="evidence" value="ECO:0007669"/>
    <property type="project" value="UniProtKB-SubCell"/>
</dbReference>
<dbReference type="GO" id="GO:0045259">
    <property type="term" value="C:proton-transporting ATP synthase complex"/>
    <property type="evidence" value="ECO:0007669"/>
    <property type="project" value="UniProtKB-KW"/>
</dbReference>
<dbReference type="GO" id="GO:0005524">
    <property type="term" value="F:ATP binding"/>
    <property type="evidence" value="ECO:0007669"/>
    <property type="project" value="UniProtKB-UniRule"/>
</dbReference>
<dbReference type="GO" id="GO:0016887">
    <property type="term" value="F:ATP hydrolysis activity"/>
    <property type="evidence" value="ECO:0007669"/>
    <property type="project" value="InterPro"/>
</dbReference>
<dbReference type="GO" id="GO:0046933">
    <property type="term" value="F:proton-transporting ATP synthase activity, rotational mechanism"/>
    <property type="evidence" value="ECO:0007669"/>
    <property type="project" value="UniProtKB-UniRule"/>
</dbReference>
<dbReference type="CDD" id="cd18110">
    <property type="entry name" value="ATP-synt_F1_beta_C"/>
    <property type="match status" value="1"/>
</dbReference>
<dbReference type="CDD" id="cd18115">
    <property type="entry name" value="ATP-synt_F1_beta_N"/>
    <property type="match status" value="1"/>
</dbReference>
<dbReference type="CDD" id="cd01133">
    <property type="entry name" value="F1-ATPase_beta_CD"/>
    <property type="match status" value="1"/>
</dbReference>
<dbReference type="FunFam" id="1.10.1140.10:FF:000001">
    <property type="entry name" value="ATP synthase subunit beta"/>
    <property type="match status" value="1"/>
</dbReference>
<dbReference type="FunFam" id="3.40.50.300:FF:000004">
    <property type="entry name" value="ATP synthase subunit beta"/>
    <property type="match status" value="1"/>
</dbReference>
<dbReference type="Gene3D" id="2.40.10.170">
    <property type="match status" value="1"/>
</dbReference>
<dbReference type="Gene3D" id="1.10.1140.10">
    <property type="entry name" value="Bovine Mitochondrial F1-atpase, Atp Synthase Beta Chain, Chain D, domain 3"/>
    <property type="match status" value="1"/>
</dbReference>
<dbReference type="Gene3D" id="3.40.50.300">
    <property type="entry name" value="P-loop containing nucleotide triphosphate hydrolases"/>
    <property type="match status" value="1"/>
</dbReference>
<dbReference type="HAMAP" id="MF_01347">
    <property type="entry name" value="ATP_synth_beta_bact"/>
    <property type="match status" value="1"/>
</dbReference>
<dbReference type="InterPro" id="IPR003593">
    <property type="entry name" value="AAA+_ATPase"/>
</dbReference>
<dbReference type="InterPro" id="IPR055190">
    <property type="entry name" value="ATP-synt_VA_C"/>
</dbReference>
<dbReference type="InterPro" id="IPR005722">
    <property type="entry name" value="ATP_synth_F1_bsu"/>
</dbReference>
<dbReference type="InterPro" id="IPR020003">
    <property type="entry name" value="ATPase_a/bsu_AS"/>
</dbReference>
<dbReference type="InterPro" id="IPR050053">
    <property type="entry name" value="ATPase_alpha/beta_chains"/>
</dbReference>
<dbReference type="InterPro" id="IPR004100">
    <property type="entry name" value="ATPase_F1/V1/A1_a/bsu_N"/>
</dbReference>
<dbReference type="InterPro" id="IPR036121">
    <property type="entry name" value="ATPase_F1/V1/A1_a/bsu_N_sf"/>
</dbReference>
<dbReference type="InterPro" id="IPR000194">
    <property type="entry name" value="ATPase_F1/V1/A1_a/bsu_nucl-bd"/>
</dbReference>
<dbReference type="InterPro" id="IPR024034">
    <property type="entry name" value="ATPase_F1/V1_b/a_C"/>
</dbReference>
<dbReference type="InterPro" id="IPR027417">
    <property type="entry name" value="P-loop_NTPase"/>
</dbReference>
<dbReference type="NCBIfam" id="TIGR01039">
    <property type="entry name" value="atpD"/>
    <property type="match status" value="1"/>
</dbReference>
<dbReference type="PANTHER" id="PTHR15184">
    <property type="entry name" value="ATP SYNTHASE"/>
    <property type="match status" value="1"/>
</dbReference>
<dbReference type="PANTHER" id="PTHR15184:SF71">
    <property type="entry name" value="ATP SYNTHASE SUBUNIT BETA, MITOCHONDRIAL"/>
    <property type="match status" value="1"/>
</dbReference>
<dbReference type="Pfam" id="PF00006">
    <property type="entry name" value="ATP-synt_ab"/>
    <property type="match status" value="1"/>
</dbReference>
<dbReference type="Pfam" id="PF02874">
    <property type="entry name" value="ATP-synt_ab_N"/>
    <property type="match status" value="1"/>
</dbReference>
<dbReference type="Pfam" id="PF22919">
    <property type="entry name" value="ATP-synt_VA_C"/>
    <property type="match status" value="1"/>
</dbReference>
<dbReference type="SMART" id="SM00382">
    <property type="entry name" value="AAA"/>
    <property type="match status" value="1"/>
</dbReference>
<dbReference type="SUPFAM" id="SSF47917">
    <property type="entry name" value="C-terminal domain of alpha and beta subunits of F1 ATP synthase"/>
    <property type="match status" value="1"/>
</dbReference>
<dbReference type="SUPFAM" id="SSF50615">
    <property type="entry name" value="N-terminal domain of alpha and beta subunits of F1 ATP synthase"/>
    <property type="match status" value="1"/>
</dbReference>
<dbReference type="SUPFAM" id="SSF52540">
    <property type="entry name" value="P-loop containing nucleoside triphosphate hydrolases"/>
    <property type="match status" value="1"/>
</dbReference>
<dbReference type="PROSITE" id="PS00152">
    <property type="entry name" value="ATPASE_ALPHA_BETA"/>
    <property type="match status" value="1"/>
</dbReference>
<gene>
    <name evidence="1" type="primary">atpD</name>
    <name type="ordered locus">LSL_0600</name>
</gene>
<reference key="1">
    <citation type="journal article" date="2006" name="Proc. Natl. Acad. Sci. U.S.A.">
        <title>Multireplicon genome architecture of Lactobacillus salivarius.</title>
        <authorList>
            <person name="Claesson M.J."/>
            <person name="Li Y."/>
            <person name="Leahy S."/>
            <person name="Canchaya C."/>
            <person name="van Pijkeren J.P."/>
            <person name="Cerdeno-Tarraga A.M."/>
            <person name="Parkhill J."/>
            <person name="Flynn S."/>
            <person name="O'Sullivan G.C."/>
            <person name="Collins J.K."/>
            <person name="Higgins D."/>
            <person name="Shanahan F."/>
            <person name="Fitzgerald G.F."/>
            <person name="van Sinderen D."/>
            <person name="O'Toole P.W."/>
        </authorList>
    </citation>
    <scope>NUCLEOTIDE SEQUENCE [LARGE SCALE GENOMIC DNA]</scope>
    <source>
        <strain>UCC118</strain>
    </source>
</reference>
<accession>Q1WUC6</accession>